<feature type="chain" id="PRO_0000253109" description="Putative membrane protein insertion efficiency factor">
    <location>
        <begin position="1"/>
        <end position="152"/>
    </location>
</feature>
<feature type="region of interest" description="Disordered" evidence="2">
    <location>
        <begin position="81"/>
        <end position="152"/>
    </location>
</feature>
<keyword id="KW-1003">Cell membrane</keyword>
<keyword id="KW-0472">Membrane</keyword>
<keyword id="KW-1185">Reference proteome</keyword>
<organism>
    <name type="scientific">Frankia casuarinae (strain DSM 45818 / CECT 9043 / HFP020203 / CcI3)</name>
    <dbReference type="NCBI Taxonomy" id="106370"/>
    <lineage>
        <taxon>Bacteria</taxon>
        <taxon>Bacillati</taxon>
        <taxon>Actinomycetota</taxon>
        <taxon>Actinomycetes</taxon>
        <taxon>Frankiales</taxon>
        <taxon>Frankiaceae</taxon>
        <taxon>Frankia</taxon>
    </lineage>
</organism>
<accession>Q2J4A0</accession>
<gene>
    <name type="ordered locus">Francci3_4546</name>
</gene>
<sequence>MVWRRLPRVARNADGAVRGPLSWTFAGLVRLYRAGWSARNAGLCRFEPSCSAYALAAVRRHGGVRGGVLAVARLLRCQPLAAGGYDPVPGTDPGPGIVRRPRGATADPGGPPDGRSAGDPAVAVPPVHRHGPPSPSQGMRAEIVGSGRGPWV</sequence>
<name>YIDD_FRACC</name>
<proteinExistence type="inferred from homology"/>
<protein>
    <recommendedName>
        <fullName evidence="1">Putative membrane protein insertion efficiency factor</fullName>
    </recommendedName>
</protein>
<comment type="function">
    <text evidence="1">Could be involved in insertion of integral membrane proteins into the membrane.</text>
</comment>
<comment type="subcellular location">
    <subcellularLocation>
        <location evidence="1">Cell membrane</location>
        <topology evidence="1">Peripheral membrane protein</topology>
        <orientation evidence="1">Cytoplasmic side</orientation>
    </subcellularLocation>
</comment>
<comment type="similarity">
    <text evidence="1">Belongs to the UPF0161 family.</text>
</comment>
<comment type="sequence caution" evidence="3">
    <conflict type="erroneous initiation">
        <sequence resource="EMBL-CDS" id="ABD13892"/>
    </conflict>
</comment>
<evidence type="ECO:0000255" key="1">
    <source>
        <dbReference type="HAMAP-Rule" id="MF_00386"/>
    </source>
</evidence>
<evidence type="ECO:0000256" key="2">
    <source>
        <dbReference type="SAM" id="MobiDB-lite"/>
    </source>
</evidence>
<evidence type="ECO:0000305" key="3"/>
<dbReference type="EMBL" id="CP000249">
    <property type="protein sequence ID" value="ABD13892.1"/>
    <property type="status" value="ALT_INIT"/>
    <property type="molecule type" value="Genomic_DNA"/>
</dbReference>
<dbReference type="STRING" id="106370.Francci3_4546"/>
<dbReference type="KEGG" id="fra:Francci3_4546"/>
<dbReference type="eggNOG" id="COG0759">
    <property type="taxonomic scope" value="Bacteria"/>
</dbReference>
<dbReference type="HOGENOM" id="CLU_114044_0_0_11"/>
<dbReference type="Proteomes" id="UP000001937">
    <property type="component" value="Chromosome"/>
</dbReference>
<dbReference type="GO" id="GO:0005886">
    <property type="term" value="C:plasma membrane"/>
    <property type="evidence" value="ECO:0007669"/>
    <property type="project" value="UniProtKB-SubCell"/>
</dbReference>
<dbReference type="HAMAP" id="MF_00386">
    <property type="entry name" value="UPF0161_YidD"/>
    <property type="match status" value="1"/>
</dbReference>
<dbReference type="InterPro" id="IPR002696">
    <property type="entry name" value="Membr_insert_effic_factor_YidD"/>
</dbReference>
<dbReference type="NCBIfam" id="TIGR00278">
    <property type="entry name" value="membrane protein insertion efficiency factor YidD"/>
    <property type="match status" value="1"/>
</dbReference>
<dbReference type="PANTHER" id="PTHR33383">
    <property type="entry name" value="MEMBRANE PROTEIN INSERTION EFFICIENCY FACTOR-RELATED"/>
    <property type="match status" value="1"/>
</dbReference>
<dbReference type="PANTHER" id="PTHR33383:SF1">
    <property type="entry name" value="MEMBRANE PROTEIN INSERTION EFFICIENCY FACTOR-RELATED"/>
    <property type="match status" value="1"/>
</dbReference>
<dbReference type="Pfam" id="PF01809">
    <property type="entry name" value="YidD"/>
    <property type="match status" value="1"/>
</dbReference>
<dbReference type="SMART" id="SM01234">
    <property type="entry name" value="Haemolytic"/>
    <property type="match status" value="1"/>
</dbReference>
<reference key="1">
    <citation type="journal article" date="2007" name="Genome Res.">
        <title>Genome characteristics of facultatively symbiotic Frankia sp. strains reflect host range and host plant biogeography.</title>
        <authorList>
            <person name="Normand P."/>
            <person name="Lapierre P."/>
            <person name="Tisa L.S."/>
            <person name="Gogarten J.P."/>
            <person name="Alloisio N."/>
            <person name="Bagnarol E."/>
            <person name="Bassi C.A."/>
            <person name="Berry A.M."/>
            <person name="Bickhart D.M."/>
            <person name="Choisne N."/>
            <person name="Couloux A."/>
            <person name="Cournoyer B."/>
            <person name="Cruveiller S."/>
            <person name="Daubin V."/>
            <person name="Demange N."/>
            <person name="Francino M.P."/>
            <person name="Goltsman E."/>
            <person name="Huang Y."/>
            <person name="Kopp O.R."/>
            <person name="Labarre L."/>
            <person name="Lapidus A."/>
            <person name="Lavire C."/>
            <person name="Marechal J."/>
            <person name="Martinez M."/>
            <person name="Mastronunzio J.E."/>
            <person name="Mullin B.C."/>
            <person name="Niemann J."/>
            <person name="Pujic P."/>
            <person name="Rawnsley T."/>
            <person name="Rouy Z."/>
            <person name="Schenowitz C."/>
            <person name="Sellstedt A."/>
            <person name="Tavares F."/>
            <person name="Tomkins J.P."/>
            <person name="Vallenet D."/>
            <person name="Valverde C."/>
            <person name="Wall L.G."/>
            <person name="Wang Y."/>
            <person name="Medigue C."/>
            <person name="Benson D.R."/>
        </authorList>
    </citation>
    <scope>NUCLEOTIDE SEQUENCE [LARGE SCALE GENOMIC DNA]</scope>
    <source>
        <strain>DSM 45818 / CECT 9043 / HFP020203 / CcI3</strain>
    </source>
</reference>